<comment type="similarity">
    <text evidence="1">Belongs to the bacterial ribosomal protein bL34 family.</text>
</comment>
<gene>
    <name evidence="1" type="primary">rpmH</name>
    <name type="ordered locus">Lferr_0036</name>
</gene>
<protein>
    <recommendedName>
        <fullName evidence="1">Large ribosomal subunit protein bL34</fullName>
    </recommendedName>
    <alternativeName>
        <fullName evidence="2">50S ribosomal protein L34</fullName>
    </alternativeName>
</protein>
<evidence type="ECO:0000255" key="1">
    <source>
        <dbReference type="HAMAP-Rule" id="MF_00391"/>
    </source>
</evidence>
<evidence type="ECO:0000305" key="2"/>
<name>RL34_ACIF5</name>
<feature type="chain" id="PRO_1000122886" description="Large ribosomal subunit protein bL34">
    <location>
        <begin position="1"/>
        <end position="44"/>
    </location>
</feature>
<accession>B5EJJ2</accession>
<organism>
    <name type="scientific">Acidithiobacillus ferrooxidans (strain ATCC 53993 / BNL-5-31)</name>
    <name type="common">Leptospirillum ferrooxidans (ATCC 53993)</name>
    <dbReference type="NCBI Taxonomy" id="380394"/>
    <lineage>
        <taxon>Bacteria</taxon>
        <taxon>Pseudomonadati</taxon>
        <taxon>Pseudomonadota</taxon>
        <taxon>Acidithiobacillia</taxon>
        <taxon>Acidithiobacillales</taxon>
        <taxon>Acidithiobacillaceae</taxon>
        <taxon>Acidithiobacillus</taxon>
    </lineage>
</organism>
<keyword id="KW-0687">Ribonucleoprotein</keyword>
<keyword id="KW-0689">Ribosomal protein</keyword>
<dbReference type="EMBL" id="CP001132">
    <property type="protein sequence ID" value="ACH82298.1"/>
    <property type="molecule type" value="Genomic_DNA"/>
</dbReference>
<dbReference type="RefSeq" id="WP_009560916.1">
    <property type="nucleotide sequence ID" value="NC_011206.1"/>
</dbReference>
<dbReference type="SMR" id="B5EJJ2"/>
<dbReference type="GeneID" id="89661775"/>
<dbReference type="KEGG" id="afe:Lferr_0036"/>
<dbReference type="eggNOG" id="COG0230">
    <property type="taxonomic scope" value="Bacteria"/>
</dbReference>
<dbReference type="HOGENOM" id="CLU_129938_2_0_6"/>
<dbReference type="GO" id="GO:1990904">
    <property type="term" value="C:ribonucleoprotein complex"/>
    <property type="evidence" value="ECO:0007669"/>
    <property type="project" value="UniProtKB-KW"/>
</dbReference>
<dbReference type="GO" id="GO:0005840">
    <property type="term" value="C:ribosome"/>
    <property type="evidence" value="ECO:0007669"/>
    <property type="project" value="UniProtKB-KW"/>
</dbReference>
<dbReference type="GO" id="GO:0003735">
    <property type="term" value="F:structural constituent of ribosome"/>
    <property type="evidence" value="ECO:0007669"/>
    <property type="project" value="InterPro"/>
</dbReference>
<dbReference type="GO" id="GO:0006412">
    <property type="term" value="P:translation"/>
    <property type="evidence" value="ECO:0007669"/>
    <property type="project" value="UniProtKB-UniRule"/>
</dbReference>
<dbReference type="FunFam" id="1.10.287.3980:FF:000001">
    <property type="entry name" value="Mitochondrial ribosomal protein L34"/>
    <property type="match status" value="1"/>
</dbReference>
<dbReference type="Gene3D" id="1.10.287.3980">
    <property type="match status" value="1"/>
</dbReference>
<dbReference type="HAMAP" id="MF_00391">
    <property type="entry name" value="Ribosomal_bL34"/>
    <property type="match status" value="1"/>
</dbReference>
<dbReference type="InterPro" id="IPR000271">
    <property type="entry name" value="Ribosomal_bL34"/>
</dbReference>
<dbReference type="InterPro" id="IPR020939">
    <property type="entry name" value="Ribosomal_bL34_CS"/>
</dbReference>
<dbReference type="NCBIfam" id="TIGR01030">
    <property type="entry name" value="rpmH_bact"/>
    <property type="match status" value="1"/>
</dbReference>
<dbReference type="PANTHER" id="PTHR14503:SF4">
    <property type="entry name" value="LARGE RIBOSOMAL SUBUNIT PROTEIN BL34M"/>
    <property type="match status" value="1"/>
</dbReference>
<dbReference type="PANTHER" id="PTHR14503">
    <property type="entry name" value="MITOCHONDRIAL RIBOSOMAL PROTEIN 34 FAMILY MEMBER"/>
    <property type="match status" value="1"/>
</dbReference>
<dbReference type="Pfam" id="PF00468">
    <property type="entry name" value="Ribosomal_L34"/>
    <property type="match status" value="1"/>
</dbReference>
<dbReference type="PROSITE" id="PS00784">
    <property type="entry name" value="RIBOSOMAL_L34"/>
    <property type="match status" value="1"/>
</dbReference>
<sequence length="44" mass="5260">MKRTFQPSVVHRKRTHGFRARMATKSGRLVLKRRRAKGRQRLCP</sequence>
<proteinExistence type="inferred from homology"/>
<reference key="1">
    <citation type="submission" date="2008-08" db="EMBL/GenBank/DDBJ databases">
        <title>Complete sequence of Acidithiobacillus ferrooxidans ATCC 53993.</title>
        <authorList>
            <person name="Lucas S."/>
            <person name="Copeland A."/>
            <person name="Lapidus A."/>
            <person name="Glavina del Rio T."/>
            <person name="Dalin E."/>
            <person name="Tice H."/>
            <person name="Bruce D."/>
            <person name="Goodwin L."/>
            <person name="Pitluck S."/>
            <person name="Sims D."/>
            <person name="Brettin T."/>
            <person name="Detter J.C."/>
            <person name="Han C."/>
            <person name="Kuske C.R."/>
            <person name="Larimer F."/>
            <person name="Land M."/>
            <person name="Hauser L."/>
            <person name="Kyrpides N."/>
            <person name="Lykidis A."/>
            <person name="Borole A.P."/>
        </authorList>
    </citation>
    <scope>NUCLEOTIDE SEQUENCE [LARGE SCALE GENOMIC DNA]</scope>
    <source>
        <strain>ATCC 53993 / BNL-5-31</strain>
    </source>
</reference>